<reference key="1">
    <citation type="journal article" date="2004" name="Genome Res.">
        <title>The complete genome and proteome of Mycoplasma mobile.</title>
        <authorList>
            <person name="Jaffe J.D."/>
            <person name="Stange-Thomann N."/>
            <person name="Smith C."/>
            <person name="DeCaprio D."/>
            <person name="Fisher S."/>
            <person name="Butler J."/>
            <person name="Calvo S."/>
            <person name="Elkins T."/>
            <person name="FitzGerald M.G."/>
            <person name="Hafez N."/>
            <person name="Kodira C.D."/>
            <person name="Major J."/>
            <person name="Wang S."/>
            <person name="Wilkinson J."/>
            <person name="Nicol R."/>
            <person name="Nusbaum C."/>
            <person name="Birren B."/>
            <person name="Berg H.C."/>
            <person name="Church G.M."/>
        </authorList>
    </citation>
    <scope>NUCLEOTIDE SEQUENCE [LARGE SCALE GENOMIC DNA]</scope>
    <source>
        <strain>ATCC 43663 / NCTC 11711 / 163 K</strain>
    </source>
</reference>
<dbReference type="EC" id="2.1.1.-"/>
<dbReference type="EMBL" id="AE017308">
    <property type="protein sequence ID" value="AAT27988.1"/>
    <property type="molecule type" value="Genomic_DNA"/>
</dbReference>
<dbReference type="RefSeq" id="WP_011265022.1">
    <property type="nucleotide sequence ID" value="NC_006908.1"/>
</dbReference>
<dbReference type="SMR" id="Q6KHE2"/>
<dbReference type="STRING" id="267748.MMOB5020"/>
<dbReference type="KEGG" id="mmo:MMOB5020"/>
<dbReference type="eggNOG" id="COG2265">
    <property type="taxonomic scope" value="Bacteria"/>
</dbReference>
<dbReference type="HOGENOM" id="CLU_014689_1_0_14"/>
<dbReference type="OrthoDB" id="9804590at2"/>
<dbReference type="Proteomes" id="UP000009072">
    <property type="component" value="Chromosome"/>
</dbReference>
<dbReference type="GO" id="GO:0070041">
    <property type="term" value="F:rRNA (uridine-C5-)-methyltransferase activity"/>
    <property type="evidence" value="ECO:0007669"/>
    <property type="project" value="TreeGrafter"/>
</dbReference>
<dbReference type="GO" id="GO:0070475">
    <property type="term" value="P:rRNA base methylation"/>
    <property type="evidence" value="ECO:0007669"/>
    <property type="project" value="TreeGrafter"/>
</dbReference>
<dbReference type="CDD" id="cd02440">
    <property type="entry name" value="AdoMet_MTases"/>
    <property type="match status" value="1"/>
</dbReference>
<dbReference type="Gene3D" id="2.40.50.1070">
    <property type="match status" value="1"/>
</dbReference>
<dbReference type="Gene3D" id="2.40.50.140">
    <property type="entry name" value="Nucleic acid-binding proteins"/>
    <property type="match status" value="1"/>
</dbReference>
<dbReference type="Gene3D" id="3.40.50.150">
    <property type="entry name" value="Vaccinia Virus protein VP39"/>
    <property type="match status" value="1"/>
</dbReference>
<dbReference type="InterPro" id="IPR030390">
    <property type="entry name" value="MeTrfase_TrmA_AS"/>
</dbReference>
<dbReference type="InterPro" id="IPR012340">
    <property type="entry name" value="NA-bd_OB-fold"/>
</dbReference>
<dbReference type="InterPro" id="IPR029063">
    <property type="entry name" value="SAM-dependent_MTases_sf"/>
</dbReference>
<dbReference type="InterPro" id="IPR010280">
    <property type="entry name" value="U5_MeTrfase_fam"/>
</dbReference>
<dbReference type="PANTHER" id="PTHR11061">
    <property type="entry name" value="RNA M5U METHYLTRANSFERASE"/>
    <property type="match status" value="1"/>
</dbReference>
<dbReference type="PANTHER" id="PTHR11061:SF30">
    <property type="entry name" value="TRNA (URACIL(54)-C(5))-METHYLTRANSFERASE"/>
    <property type="match status" value="1"/>
</dbReference>
<dbReference type="Pfam" id="PF05958">
    <property type="entry name" value="tRNA_U5-meth_tr"/>
    <property type="match status" value="1"/>
</dbReference>
<dbReference type="SUPFAM" id="SSF50249">
    <property type="entry name" value="Nucleic acid-binding proteins"/>
    <property type="match status" value="1"/>
</dbReference>
<dbReference type="SUPFAM" id="SSF53335">
    <property type="entry name" value="S-adenosyl-L-methionine-dependent methyltransferases"/>
    <property type="match status" value="1"/>
</dbReference>
<dbReference type="PROSITE" id="PS51687">
    <property type="entry name" value="SAM_MT_RNA_M5U"/>
    <property type="match status" value="1"/>
</dbReference>
<dbReference type="PROSITE" id="PS01230">
    <property type="entry name" value="TRMA_1"/>
    <property type="match status" value="1"/>
</dbReference>
<evidence type="ECO:0000255" key="1">
    <source>
        <dbReference type="PROSITE-ProRule" id="PRU01024"/>
    </source>
</evidence>
<organism>
    <name type="scientific">Mycoplasma mobile (strain ATCC 43663 / 163K / NCTC 11711)</name>
    <name type="common">Mesomycoplasma mobile</name>
    <dbReference type="NCBI Taxonomy" id="267748"/>
    <lineage>
        <taxon>Bacteria</taxon>
        <taxon>Bacillati</taxon>
        <taxon>Mycoplasmatota</taxon>
        <taxon>Mycoplasmoidales</taxon>
        <taxon>Metamycoplasmataceae</taxon>
        <taxon>Mesomycoplasma</taxon>
    </lineage>
</organism>
<feature type="chain" id="PRO_0000162003" description="Uncharacterized RNA methyltransferase MMOB5020">
    <location>
        <begin position="1"/>
        <end position="363"/>
    </location>
</feature>
<feature type="active site" description="Nucleophile" evidence="1">
    <location>
        <position position="318"/>
    </location>
</feature>
<feature type="binding site" evidence="1">
    <location>
        <position position="198"/>
    </location>
    <ligand>
        <name>S-adenosyl-L-methionine</name>
        <dbReference type="ChEBI" id="CHEBI:59789"/>
    </ligand>
</feature>
<feature type="binding site" evidence="1">
    <location>
        <position position="225"/>
    </location>
    <ligand>
        <name>S-adenosyl-L-methionine</name>
        <dbReference type="ChEBI" id="CHEBI:59789"/>
    </ligand>
</feature>
<feature type="binding site" evidence="1">
    <location>
        <position position="246"/>
    </location>
    <ligand>
        <name>S-adenosyl-L-methionine</name>
        <dbReference type="ChEBI" id="CHEBI:59789"/>
    </ligand>
</feature>
<feature type="binding site" evidence="1">
    <location>
        <position position="291"/>
    </location>
    <ligand>
        <name>S-adenosyl-L-methionine</name>
        <dbReference type="ChEBI" id="CHEBI:59789"/>
    </ligand>
</feature>
<sequence>MIAELEIIFYSQKGEGVGFYLNKPTYVKGVIKGEKIKAFIYLESASFFKARLVEILIESKNRNHDVPKLHYLIGGYELLHMNNTEQINFKKERVINDFKKIANYEISSLELVQGKKLLHYRNKITLHYGSLYLANSNHKIKLAKSLLTDINLKANKKEAEWIIRKLDTQIEGTKQTKIYTTDKMNGITFRVGLNSFYQVNKEVANLIYNQISEFINLNENVLDLYSGIGTISLLIAAKAKSVTGVERNLDSIEDANFNKEFNKIKNVNFIHQDVIKYLKQNKTYFDTVIVDPARRGLEEDIIELILKLKPQKIIYLSCNVGTQASNFNKFKHEYQIEFIKSYDMFPQTYHIESLMVLKKLNKQ</sequence>
<keyword id="KW-0489">Methyltransferase</keyword>
<keyword id="KW-1185">Reference proteome</keyword>
<keyword id="KW-0949">S-adenosyl-L-methionine</keyword>
<keyword id="KW-0808">Transferase</keyword>
<accession>Q6KHE2</accession>
<protein>
    <recommendedName>
        <fullName>Uncharacterized RNA methyltransferase MMOB5020</fullName>
        <ecNumber>2.1.1.-</ecNumber>
    </recommendedName>
</protein>
<comment type="similarity">
    <text evidence="1">Belongs to the class I-like SAM-binding methyltransferase superfamily. RNA M5U methyltransferase family.</text>
</comment>
<proteinExistence type="inferred from homology"/>
<gene>
    <name type="ordered locus">MMOB5020</name>
</gene>
<name>Y5020_MYCM1</name>